<dbReference type="EMBL" id="EU951794">
    <property type="protein sequence ID" value="ACG23912.1"/>
    <property type="molecule type" value="mRNA"/>
</dbReference>
<dbReference type="EMBL" id="EU952866">
    <property type="protein sequence ID" value="ACG24984.1"/>
    <property type="molecule type" value="mRNA"/>
</dbReference>
<dbReference type="EMBL" id="BT035897">
    <property type="protein sequence ID" value="ACF80902.1"/>
    <property type="molecule type" value="mRNA"/>
</dbReference>
<dbReference type="RefSeq" id="NP_001307040.1">
    <property type="nucleotide sequence ID" value="NM_001320111.1"/>
</dbReference>
<dbReference type="FunCoup" id="B4FFK9">
    <property type="interactions" value="73"/>
</dbReference>
<dbReference type="STRING" id="4577.B4FFK9"/>
<dbReference type="PaxDb" id="4577-GRMZM2G043521_P01"/>
<dbReference type="EnsemblPlants" id="Zm00001eb153230_T001">
    <property type="protein sequence ID" value="Zm00001eb153230_P001"/>
    <property type="gene ID" value="Zm00001eb153230"/>
</dbReference>
<dbReference type="GeneID" id="100274115"/>
<dbReference type="Gramene" id="Zm00001eb153230_T001">
    <property type="protein sequence ID" value="Zm00001eb153230_P001"/>
    <property type="gene ID" value="Zm00001eb153230"/>
</dbReference>
<dbReference type="KEGG" id="zma:100274115"/>
<dbReference type="eggNOG" id="ENOG502QPUT">
    <property type="taxonomic scope" value="Eukaryota"/>
</dbReference>
<dbReference type="HOGENOM" id="CLU_071931_0_0_1"/>
<dbReference type="InParanoid" id="B4FFK9"/>
<dbReference type="OMA" id="TSRVGIM"/>
<dbReference type="OrthoDB" id="1901244at2759"/>
<dbReference type="Proteomes" id="UP000007305">
    <property type="component" value="Chromosome 3"/>
</dbReference>
<dbReference type="ExpressionAtlas" id="B4FFK9">
    <property type="expression patterns" value="baseline and differential"/>
</dbReference>
<dbReference type="InterPro" id="IPR010686">
    <property type="entry name" value="OBAP-like"/>
</dbReference>
<dbReference type="PANTHER" id="PTHR31360">
    <property type="match status" value="1"/>
</dbReference>
<dbReference type="PANTHER" id="PTHR31360:SF1">
    <property type="entry name" value="OIL BODY-ASSOCIATED PROTEIN 2A"/>
    <property type="match status" value="1"/>
</dbReference>
<dbReference type="Pfam" id="PF06884">
    <property type="entry name" value="DUF1264"/>
    <property type="match status" value="1"/>
</dbReference>
<reference key="1">
    <citation type="journal article" date="2009" name="Science">
        <title>The B73 maize genome: complexity, diversity, and dynamics.</title>
        <authorList>
            <person name="Schnable P.S."/>
            <person name="Ware D."/>
            <person name="Fulton R.S."/>
            <person name="Stein J.C."/>
            <person name="Wei F."/>
            <person name="Pasternak S."/>
            <person name="Liang C."/>
            <person name="Zhang J."/>
            <person name="Fulton L."/>
            <person name="Graves T.A."/>
            <person name="Minx P."/>
            <person name="Reily A.D."/>
            <person name="Courtney L."/>
            <person name="Kruchowski S.S."/>
            <person name="Tomlinson C."/>
            <person name="Strong C."/>
            <person name="Delehaunty K."/>
            <person name="Fronick C."/>
            <person name="Courtney B."/>
            <person name="Rock S.M."/>
            <person name="Belter E."/>
            <person name="Du F."/>
            <person name="Kim K."/>
            <person name="Abbott R.M."/>
            <person name="Cotton M."/>
            <person name="Levy A."/>
            <person name="Marchetto P."/>
            <person name="Ochoa K."/>
            <person name="Jackson S.M."/>
            <person name="Gillam B."/>
            <person name="Chen W."/>
            <person name="Yan L."/>
            <person name="Higginbotham J."/>
            <person name="Cardenas M."/>
            <person name="Waligorski J."/>
            <person name="Applebaum E."/>
            <person name="Phelps L."/>
            <person name="Falcone J."/>
            <person name="Kanchi K."/>
            <person name="Thane T."/>
            <person name="Scimone A."/>
            <person name="Thane N."/>
            <person name="Henke J."/>
            <person name="Wang T."/>
            <person name="Ruppert J."/>
            <person name="Shah N."/>
            <person name="Rotter K."/>
            <person name="Hodges J."/>
            <person name="Ingenthron E."/>
            <person name="Cordes M."/>
            <person name="Kohlberg S."/>
            <person name="Sgro J."/>
            <person name="Delgado B."/>
            <person name="Mead K."/>
            <person name="Chinwalla A."/>
            <person name="Leonard S."/>
            <person name="Crouse K."/>
            <person name="Collura K."/>
            <person name="Kudrna D."/>
            <person name="Currie J."/>
            <person name="He R."/>
            <person name="Angelova A."/>
            <person name="Rajasekar S."/>
            <person name="Mueller T."/>
            <person name="Lomeli R."/>
            <person name="Scara G."/>
            <person name="Ko A."/>
            <person name="Delaney K."/>
            <person name="Wissotski M."/>
            <person name="Lopez G."/>
            <person name="Campos D."/>
            <person name="Braidotti M."/>
            <person name="Ashley E."/>
            <person name="Golser W."/>
            <person name="Kim H."/>
            <person name="Lee S."/>
            <person name="Lin J."/>
            <person name="Dujmic Z."/>
            <person name="Kim W."/>
            <person name="Talag J."/>
            <person name="Zuccolo A."/>
            <person name="Fan C."/>
            <person name="Sebastian A."/>
            <person name="Kramer M."/>
            <person name="Spiegel L."/>
            <person name="Nascimento L."/>
            <person name="Zutavern T."/>
            <person name="Miller B."/>
            <person name="Ambroise C."/>
            <person name="Muller S."/>
            <person name="Spooner W."/>
            <person name="Narechania A."/>
            <person name="Ren L."/>
            <person name="Wei S."/>
            <person name="Kumari S."/>
            <person name="Faga B."/>
            <person name="Levy M.J."/>
            <person name="McMahan L."/>
            <person name="Van Buren P."/>
            <person name="Vaughn M.W."/>
            <person name="Ying K."/>
            <person name="Yeh C.-T."/>
            <person name="Emrich S.J."/>
            <person name="Jia Y."/>
            <person name="Kalyanaraman A."/>
            <person name="Hsia A.-P."/>
            <person name="Barbazuk W.B."/>
            <person name="Baucom R.S."/>
            <person name="Brutnell T.P."/>
            <person name="Carpita N.C."/>
            <person name="Chaparro C."/>
            <person name="Chia J.-M."/>
            <person name="Deragon J.-M."/>
            <person name="Estill J.C."/>
            <person name="Fu Y."/>
            <person name="Jeddeloh J.A."/>
            <person name="Han Y."/>
            <person name="Lee H."/>
            <person name="Li P."/>
            <person name="Lisch D.R."/>
            <person name="Liu S."/>
            <person name="Liu Z."/>
            <person name="Nagel D.H."/>
            <person name="McCann M.C."/>
            <person name="SanMiguel P."/>
            <person name="Myers A.M."/>
            <person name="Nettleton D."/>
            <person name="Nguyen J."/>
            <person name="Penning B.W."/>
            <person name="Ponnala L."/>
            <person name="Schneider K.L."/>
            <person name="Schwartz D.C."/>
            <person name="Sharma A."/>
            <person name="Soderlund C."/>
            <person name="Springer N.M."/>
            <person name="Sun Q."/>
            <person name="Wang H."/>
            <person name="Waterman M."/>
            <person name="Westerman R."/>
            <person name="Wolfgruber T.K."/>
            <person name="Yang L."/>
            <person name="Yu Y."/>
            <person name="Zhang L."/>
            <person name="Zhou S."/>
            <person name="Zhu Q."/>
            <person name="Bennetzen J.L."/>
            <person name="Dawe R.K."/>
            <person name="Jiang J."/>
            <person name="Jiang N."/>
            <person name="Presting G.G."/>
            <person name="Wessler S.R."/>
            <person name="Aluru S."/>
            <person name="Martienssen R.A."/>
            <person name="Clifton S.W."/>
            <person name="McCombie W.R."/>
            <person name="Wing R.A."/>
            <person name="Wilson R.K."/>
        </authorList>
    </citation>
    <scope>NUCLEOTIDE SEQUENCE [LARGE SCALE GENOMIC DNA]</scope>
    <source>
        <strain>cv. B73</strain>
    </source>
</reference>
<reference key="2">
    <citation type="journal article" date="2009" name="Plant Mol. Biol.">
        <title>Insights into corn genes derived from large-scale cDNA sequencing.</title>
        <authorList>
            <person name="Alexandrov N.N."/>
            <person name="Brover V.V."/>
            <person name="Freidin S."/>
            <person name="Troukhan M.E."/>
            <person name="Tatarinova T.V."/>
            <person name="Zhang H."/>
            <person name="Swaller T.J."/>
            <person name="Lu Y.-P."/>
            <person name="Bouck J."/>
            <person name="Flavell R.B."/>
            <person name="Feldmann K.A."/>
        </authorList>
    </citation>
    <scope>NUCLEOTIDE SEQUENCE [LARGE SCALE MRNA]</scope>
</reference>
<reference key="3">
    <citation type="journal article" date="2009" name="PLoS Genet.">
        <title>Sequencing, mapping, and analysis of 27,455 maize full-length cDNAs.</title>
        <authorList>
            <person name="Soderlund C."/>
            <person name="Descour A."/>
            <person name="Kudrna D."/>
            <person name="Bomhoff M."/>
            <person name="Boyd L."/>
            <person name="Currie J."/>
            <person name="Angelova A."/>
            <person name="Collura K."/>
            <person name="Wissotski M."/>
            <person name="Ashley E."/>
            <person name="Morrow D."/>
            <person name="Fernandes J."/>
            <person name="Walbot V."/>
            <person name="Yu Y."/>
        </authorList>
    </citation>
    <scope>NUCLEOTIDE SEQUENCE [LARGE SCALE MRNA]</scope>
    <source>
        <strain>cv. B73</strain>
    </source>
</reference>
<reference key="4">
    <citation type="journal article" date="2014" name="Plant Physiol.">
        <title>The evolutionary conserved oil body associated protein OBAP1 participates in the regulation of oil body size.</title>
        <authorList>
            <person name="Lopez-Ribera I."/>
            <person name="La Paz J.L."/>
            <person name="Repiso C."/>
            <person name="Garcia N."/>
            <person name="Miquel M."/>
            <person name="Hernandez M.L."/>
            <person name="Martinez-Rivas J.M."/>
            <person name="Vicient C.M."/>
        </authorList>
    </citation>
    <scope>GENE FAMILY</scope>
    <scope>NOMENCLATURE</scope>
</reference>
<comment type="similarity">
    <text evidence="3">Belongs to the OBAP family.</text>
</comment>
<gene>
    <name evidence="2" type="primary">OBAP2A</name>
    <name evidence="3" type="ORF">GRMZM2G043521</name>
    <name type="ORF">Zm.162886</name>
</gene>
<evidence type="ECO:0000256" key="1">
    <source>
        <dbReference type="SAM" id="MobiDB-lite"/>
    </source>
</evidence>
<evidence type="ECO:0000303" key="2">
    <source>
    </source>
</evidence>
<evidence type="ECO:0000305" key="3"/>
<protein>
    <recommendedName>
        <fullName evidence="2">Oil body-associated protein 2A</fullName>
    </recommendedName>
</protein>
<accession>B4FFK9</accession>
<organism>
    <name type="scientific">Zea mays</name>
    <name type="common">Maize</name>
    <dbReference type="NCBI Taxonomy" id="4577"/>
    <lineage>
        <taxon>Eukaryota</taxon>
        <taxon>Viridiplantae</taxon>
        <taxon>Streptophyta</taxon>
        <taxon>Embryophyta</taxon>
        <taxon>Tracheophyta</taxon>
        <taxon>Spermatophyta</taxon>
        <taxon>Magnoliopsida</taxon>
        <taxon>Liliopsida</taxon>
        <taxon>Poales</taxon>
        <taxon>Poaceae</taxon>
        <taxon>PACMAD clade</taxon>
        <taxon>Panicoideae</taxon>
        <taxon>Andropogonodae</taxon>
        <taxon>Andropogoneae</taxon>
        <taxon>Tripsacinae</taxon>
        <taxon>Zea</taxon>
    </lineage>
</organism>
<name>OBP2A_MAIZE</name>
<feature type="chain" id="PRO_0000436092" description="Oil body-associated protein 2A">
    <location>
        <begin position="1"/>
        <end position="252"/>
    </location>
</feature>
<feature type="region of interest" description="Disordered" evidence="1">
    <location>
        <begin position="1"/>
        <end position="31"/>
    </location>
</feature>
<feature type="compositionally biased region" description="Low complexity" evidence="1">
    <location>
        <begin position="22"/>
        <end position="31"/>
    </location>
</feature>
<proteinExistence type="evidence at transcript level"/>
<keyword id="KW-1185">Reference proteome</keyword>
<sequence>MASSDGKPLPTPASVGGGGGSSTAPPGQPTTVASKVLDMGAAAMQSLRPVKQAKQHMCTFALYAHDPKRQVETHHYVSRLNQDFLQCAVYDSDKADARLIGVEYIVSRKIFDSLPAEEQRLWHSHAHEIKSGLWTSPHVAGLLEKAELDHMAATFGKFWCTWQVDRGDRLPLGAPALMVSPQADPAAAVRPDLVRKRDDRYGLSTEELRAARADVEAPAEEHPGQADYWLRHRKGFAVDVVPHEMKRHAPFP</sequence>